<comment type="function">
    <text evidence="1">Binds as a heterodimer with protein bS6 to the central domain of the 16S rRNA, where it helps stabilize the platform of the 30S subunit.</text>
</comment>
<comment type="subunit">
    <text evidence="1">Part of the 30S ribosomal subunit. Forms a tight heterodimer with protein bS6.</text>
</comment>
<comment type="similarity">
    <text evidence="1">Belongs to the bacterial ribosomal protein bS18 family.</text>
</comment>
<keyword id="KW-0687">Ribonucleoprotein</keyword>
<keyword id="KW-0689">Ribosomal protein</keyword>
<keyword id="KW-0694">RNA-binding</keyword>
<keyword id="KW-0699">rRNA-binding</keyword>
<organism>
    <name type="scientific">Francisella tularensis subsp. tularensis (strain FSC 198)</name>
    <dbReference type="NCBI Taxonomy" id="393115"/>
    <lineage>
        <taxon>Bacteria</taxon>
        <taxon>Pseudomonadati</taxon>
        <taxon>Pseudomonadota</taxon>
        <taxon>Gammaproteobacteria</taxon>
        <taxon>Thiotrichales</taxon>
        <taxon>Francisellaceae</taxon>
        <taxon>Francisella</taxon>
    </lineage>
</organism>
<protein>
    <recommendedName>
        <fullName evidence="1">Small ribosomal subunit protein bS18</fullName>
    </recommendedName>
    <alternativeName>
        <fullName evidence="2">30S ribosomal protein S18</fullName>
    </alternativeName>
</protein>
<proteinExistence type="inferred from homology"/>
<gene>
    <name evidence="1" type="primary">rpsR</name>
    <name type="ordered locus">FTF1061c</name>
</gene>
<feature type="chain" id="PRO_0000345475" description="Small ribosomal subunit protein bS18">
    <location>
        <begin position="1"/>
        <end position="72"/>
    </location>
</feature>
<sequence>MSRRKVCRFTVEGVKEIDYKDVNKLKAYITETGKIVPSRVTGTSAKYQRQLATAIKRARFLALLPYCDRHFN</sequence>
<evidence type="ECO:0000255" key="1">
    <source>
        <dbReference type="HAMAP-Rule" id="MF_00270"/>
    </source>
</evidence>
<evidence type="ECO:0000305" key="2"/>
<accession>Q14HF2</accession>
<name>RS18_FRAT1</name>
<dbReference type="EMBL" id="AM286280">
    <property type="protein sequence ID" value="CAL09077.1"/>
    <property type="molecule type" value="Genomic_DNA"/>
</dbReference>
<dbReference type="RefSeq" id="WP_003021184.1">
    <property type="nucleotide sequence ID" value="NC_008245.1"/>
</dbReference>
<dbReference type="SMR" id="Q14HF2"/>
<dbReference type="GeneID" id="75265314"/>
<dbReference type="KEGG" id="ftf:FTF1061c"/>
<dbReference type="HOGENOM" id="CLU_148710_2_3_6"/>
<dbReference type="GO" id="GO:0022627">
    <property type="term" value="C:cytosolic small ribosomal subunit"/>
    <property type="evidence" value="ECO:0007669"/>
    <property type="project" value="TreeGrafter"/>
</dbReference>
<dbReference type="GO" id="GO:0070181">
    <property type="term" value="F:small ribosomal subunit rRNA binding"/>
    <property type="evidence" value="ECO:0007669"/>
    <property type="project" value="TreeGrafter"/>
</dbReference>
<dbReference type="GO" id="GO:0003735">
    <property type="term" value="F:structural constituent of ribosome"/>
    <property type="evidence" value="ECO:0007669"/>
    <property type="project" value="InterPro"/>
</dbReference>
<dbReference type="GO" id="GO:0006412">
    <property type="term" value="P:translation"/>
    <property type="evidence" value="ECO:0007669"/>
    <property type="project" value="UniProtKB-UniRule"/>
</dbReference>
<dbReference type="Gene3D" id="4.10.640.10">
    <property type="entry name" value="Ribosomal protein S18"/>
    <property type="match status" value="1"/>
</dbReference>
<dbReference type="HAMAP" id="MF_00270">
    <property type="entry name" value="Ribosomal_bS18"/>
    <property type="match status" value="1"/>
</dbReference>
<dbReference type="InterPro" id="IPR001648">
    <property type="entry name" value="Ribosomal_bS18"/>
</dbReference>
<dbReference type="InterPro" id="IPR018275">
    <property type="entry name" value="Ribosomal_bS18_CS"/>
</dbReference>
<dbReference type="InterPro" id="IPR036870">
    <property type="entry name" value="Ribosomal_bS18_sf"/>
</dbReference>
<dbReference type="NCBIfam" id="TIGR00165">
    <property type="entry name" value="S18"/>
    <property type="match status" value="1"/>
</dbReference>
<dbReference type="PANTHER" id="PTHR13479">
    <property type="entry name" value="30S RIBOSOMAL PROTEIN S18"/>
    <property type="match status" value="1"/>
</dbReference>
<dbReference type="PANTHER" id="PTHR13479:SF40">
    <property type="entry name" value="SMALL RIBOSOMAL SUBUNIT PROTEIN BS18M"/>
    <property type="match status" value="1"/>
</dbReference>
<dbReference type="Pfam" id="PF01084">
    <property type="entry name" value="Ribosomal_S18"/>
    <property type="match status" value="1"/>
</dbReference>
<dbReference type="PRINTS" id="PR00974">
    <property type="entry name" value="RIBOSOMALS18"/>
</dbReference>
<dbReference type="SUPFAM" id="SSF46911">
    <property type="entry name" value="Ribosomal protein S18"/>
    <property type="match status" value="1"/>
</dbReference>
<dbReference type="PROSITE" id="PS00057">
    <property type="entry name" value="RIBOSOMAL_S18"/>
    <property type="match status" value="1"/>
</dbReference>
<reference key="1">
    <citation type="journal article" date="2007" name="PLoS ONE">
        <title>Genome sequencing shows that European isolates of Francisella tularensis subspecies tularensis are almost identical to US laboratory strain Schu S4.</title>
        <authorList>
            <person name="Chaudhuri R.R."/>
            <person name="Ren C.-P."/>
            <person name="Desmond L."/>
            <person name="Vincent G.A."/>
            <person name="Silman N.J."/>
            <person name="Brehm J.K."/>
            <person name="Elmore M.J."/>
            <person name="Hudson M.J."/>
            <person name="Forsman M."/>
            <person name="Isherwood K.E."/>
            <person name="Gurycova D."/>
            <person name="Minton N.P."/>
            <person name="Titball R.W."/>
            <person name="Pallen M.J."/>
            <person name="Vipond R."/>
        </authorList>
    </citation>
    <scope>NUCLEOTIDE SEQUENCE [LARGE SCALE GENOMIC DNA]</scope>
    <source>
        <strain>FSC 198</strain>
    </source>
</reference>